<feature type="chain" id="PRO_1000013484" description="Large ribosomal subunit protein bL34">
    <location>
        <begin position="1"/>
        <end position="44"/>
    </location>
</feature>
<feature type="region of interest" description="Disordered" evidence="2">
    <location>
        <begin position="1"/>
        <end position="44"/>
    </location>
</feature>
<accession>A5IMC1</accession>
<organism>
    <name type="scientific">Thermotoga petrophila (strain ATCC BAA-488 / DSM 13995 / JCM 10881 / RKU-1)</name>
    <dbReference type="NCBI Taxonomy" id="390874"/>
    <lineage>
        <taxon>Bacteria</taxon>
        <taxon>Thermotogati</taxon>
        <taxon>Thermotogota</taxon>
        <taxon>Thermotogae</taxon>
        <taxon>Thermotogales</taxon>
        <taxon>Thermotogaceae</taxon>
        <taxon>Thermotoga</taxon>
    </lineage>
</organism>
<evidence type="ECO:0000255" key="1">
    <source>
        <dbReference type="HAMAP-Rule" id="MF_00391"/>
    </source>
</evidence>
<evidence type="ECO:0000256" key="2">
    <source>
        <dbReference type="SAM" id="MobiDB-lite"/>
    </source>
</evidence>
<evidence type="ECO:0000305" key="3"/>
<proteinExistence type="inferred from homology"/>
<sequence>MKRTYQPSRRKRKRTHGFLARKRTPGGRRVLKNRRRKGRWRLTV</sequence>
<keyword id="KW-0687">Ribonucleoprotein</keyword>
<keyword id="KW-0689">Ribosomal protein</keyword>
<protein>
    <recommendedName>
        <fullName evidence="1">Large ribosomal subunit protein bL34</fullName>
    </recommendedName>
    <alternativeName>
        <fullName evidence="3">50S ribosomal protein L34</fullName>
    </alternativeName>
</protein>
<gene>
    <name evidence="1" type="primary">rpmH</name>
    <name type="ordered locus">Tpet_1330</name>
</gene>
<dbReference type="EMBL" id="CP000702">
    <property type="protein sequence ID" value="ABQ47344.1"/>
    <property type="molecule type" value="Genomic_DNA"/>
</dbReference>
<dbReference type="RefSeq" id="WP_004081758.1">
    <property type="nucleotide sequence ID" value="NC_009486.1"/>
</dbReference>
<dbReference type="SMR" id="A5IMC1"/>
<dbReference type="STRING" id="390874.Tpet_1330"/>
<dbReference type="KEGG" id="tpt:Tpet_1330"/>
<dbReference type="eggNOG" id="COG0230">
    <property type="taxonomic scope" value="Bacteria"/>
</dbReference>
<dbReference type="HOGENOM" id="CLU_129938_2_0_0"/>
<dbReference type="Proteomes" id="UP000006558">
    <property type="component" value="Chromosome"/>
</dbReference>
<dbReference type="GO" id="GO:1990904">
    <property type="term" value="C:ribonucleoprotein complex"/>
    <property type="evidence" value="ECO:0007669"/>
    <property type="project" value="UniProtKB-KW"/>
</dbReference>
<dbReference type="GO" id="GO:0005840">
    <property type="term" value="C:ribosome"/>
    <property type="evidence" value="ECO:0007669"/>
    <property type="project" value="UniProtKB-KW"/>
</dbReference>
<dbReference type="GO" id="GO:0003735">
    <property type="term" value="F:structural constituent of ribosome"/>
    <property type="evidence" value="ECO:0007669"/>
    <property type="project" value="InterPro"/>
</dbReference>
<dbReference type="GO" id="GO:0006412">
    <property type="term" value="P:translation"/>
    <property type="evidence" value="ECO:0007669"/>
    <property type="project" value="UniProtKB-UniRule"/>
</dbReference>
<dbReference type="FunFam" id="1.10.287.3980:FF:000001">
    <property type="entry name" value="Mitochondrial ribosomal protein L34"/>
    <property type="match status" value="1"/>
</dbReference>
<dbReference type="Gene3D" id="1.10.287.3980">
    <property type="match status" value="1"/>
</dbReference>
<dbReference type="HAMAP" id="MF_00391">
    <property type="entry name" value="Ribosomal_bL34"/>
    <property type="match status" value="1"/>
</dbReference>
<dbReference type="InterPro" id="IPR000271">
    <property type="entry name" value="Ribosomal_bL34"/>
</dbReference>
<dbReference type="InterPro" id="IPR020939">
    <property type="entry name" value="Ribosomal_bL34_CS"/>
</dbReference>
<dbReference type="NCBIfam" id="TIGR01030">
    <property type="entry name" value="rpmH_bact"/>
    <property type="match status" value="1"/>
</dbReference>
<dbReference type="PANTHER" id="PTHR14503:SF4">
    <property type="entry name" value="LARGE RIBOSOMAL SUBUNIT PROTEIN BL34M"/>
    <property type="match status" value="1"/>
</dbReference>
<dbReference type="PANTHER" id="PTHR14503">
    <property type="entry name" value="MITOCHONDRIAL RIBOSOMAL PROTEIN 34 FAMILY MEMBER"/>
    <property type="match status" value="1"/>
</dbReference>
<dbReference type="Pfam" id="PF00468">
    <property type="entry name" value="Ribosomal_L34"/>
    <property type="match status" value="1"/>
</dbReference>
<dbReference type="PROSITE" id="PS00784">
    <property type="entry name" value="RIBOSOMAL_L34"/>
    <property type="match status" value="1"/>
</dbReference>
<comment type="similarity">
    <text evidence="1">Belongs to the bacterial ribosomal protein bL34 family.</text>
</comment>
<reference key="1">
    <citation type="submission" date="2007-05" db="EMBL/GenBank/DDBJ databases">
        <title>Complete sequence of Thermotoga petrophila RKU-1.</title>
        <authorList>
            <consortium name="US DOE Joint Genome Institute"/>
            <person name="Copeland A."/>
            <person name="Lucas S."/>
            <person name="Lapidus A."/>
            <person name="Barry K."/>
            <person name="Glavina del Rio T."/>
            <person name="Dalin E."/>
            <person name="Tice H."/>
            <person name="Pitluck S."/>
            <person name="Sims D."/>
            <person name="Brettin T."/>
            <person name="Bruce D."/>
            <person name="Detter J.C."/>
            <person name="Han C."/>
            <person name="Tapia R."/>
            <person name="Schmutz J."/>
            <person name="Larimer F."/>
            <person name="Land M."/>
            <person name="Hauser L."/>
            <person name="Kyrpides N."/>
            <person name="Mikhailova N."/>
            <person name="Nelson K."/>
            <person name="Gogarten J.P."/>
            <person name="Noll K."/>
            <person name="Richardson P."/>
        </authorList>
    </citation>
    <scope>NUCLEOTIDE SEQUENCE [LARGE SCALE GENOMIC DNA]</scope>
    <source>
        <strain>ATCC BAA-488 / DSM 13995 / JCM 10881 / RKU-1</strain>
    </source>
</reference>
<name>RL34_THEP1</name>